<keyword id="KW-1185">Reference proteome</keyword>
<keyword id="KW-0687">Ribonucleoprotein</keyword>
<keyword id="KW-0689">Ribosomal protein</keyword>
<keyword id="KW-0694">RNA-binding</keyword>
<keyword id="KW-0699">rRNA-binding</keyword>
<comment type="function">
    <text evidence="1">This protein binds specifically to 23S rRNA; its binding is stimulated by other ribosomal proteins, e.g. L4, L17, and L20. It is important during the early stages of 50S assembly. It makes multiple contacts with different domains of the 23S rRNA in the assembled 50S subunit and ribosome (By similarity).</text>
</comment>
<comment type="function">
    <text evidence="1">The globular domain of the protein is located near the polypeptide exit tunnel on the outside of the subunit, while an extended beta-hairpin is found that lines the wall of the exit tunnel in the center of the 70S ribosome.</text>
</comment>
<comment type="subunit">
    <text evidence="1">Part of the 50S ribosomal subunit.</text>
</comment>
<comment type="similarity">
    <text evidence="1">Belongs to the universal ribosomal protein uL22 family.</text>
</comment>
<protein>
    <recommendedName>
        <fullName evidence="1">Large ribosomal subunit protein uL22</fullName>
    </recommendedName>
    <alternativeName>
        <fullName evidence="2">50S ribosomal protein L22</fullName>
    </alternativeName>
</protein>
<proteinExistence type="inferred from homology"/>
<organism>
    <name type="scientific">Crocosphaera subtropica (strain ATCC 51142 / BH68)</name>
    <name type="common">Cyanothece sp. (strain ATCC 51142)</name>
    <dbReference type="NCBI Taxonomy" id="43989"/>
    <lineage>
        <taxon>Bacteria</taxon>
        <taxon>Bacillati</taxon>
        <taxon>Cyanobacteriota</taxon>
        <taxon>Cyanophyceae</taxon>
        <taxon>Oscillatoriophycideae</taxon>
        <taxon>Chroococcales</taxon>
        <taxon>Aphanothecaceae</taxon>
        <taxon>Crocosphaera</taxon>
        <taxon>Crocosphaera subtropica</taxon>
    </lineage>
</organism>
<dbReference type="EMBL" id="CP000806">
    <property type="protein sequence ID" value="ACB53367.1"/>
    <property type="molecule type" value="Genomic_DNA"/>
</dbReference>
<dbReference type="RefSeq" id="WP_009543891.1">
    <property type="nucleotide sequence ID" value="NC_010546.1"/>
</dbReference>
<dbReference type="SMR" id="B1WQR5"/>
<dbReference type="STRING" id="43989.cce_4019"/>
<dbReference type="KEGG" id="cyt:cce_4019"/>
<dbReference type="eggNOG" id="COG0091">
    <property type="taxonomic scope" value="Bacteria"/>
</dbReference>
<dbReference type="HOGENOM" id="CLU_083987_3_2_3"/>
<dbReference type="OrthoDB" id="9805969at2"/>
<dbReference type="Proteomes" id="UP000001203">
    <property type="component" value="Chromosome circular"/>
</dbReference>
<dbReference type="GO" id="GO:0022625">
    <property type="term" value="C:cytosolic large ribosomal subunit"/>
    <property type="evidence" value="ECO:0007669"/>
    <property type="project" value="TreeGrafter"/>
</dbReference>
<dbReference type="GO" id="GO:0019843">
    <property type="term" value="F:rRNA binding"/>
    <property type="evidence" value="ECO:0007669"/>
    <property type="project" value="UniProtKB-UniRule"/>
</dbReference>
<dbReference type="GO" id="GO:0003735">
    <property type="term" value="F:structural constituent of ribosome"/>
    <property type="evidence" value="ECO:0007669"/>
    <property type="project" value="InterPro"/>
</dbReference>
<dbReference type="GO" id="GO:0006412">
    <property type="term" value="P:translation"/>
    <property type="evidence" value="ECO:0007669"/>
    <property type="project" value="UniProtKB-UniRule"/>
</dbReference>
<dbReference type="CDD" id="cd00336">
    <property type="entry name" value="Ribosomal_L22"/>
    <property type="match status" value="1"/>
</dbReference>
<dbReference type="FunFam" id="3.90.470.10:FF:000004">
    <property type="entry name" value="50S ribosomal protein L22, chloroplastic"/>
    <property type="match status" value="1"/>
</dbReference>
<dbReference type="Gene3D" id="3.90.470.10">
    <property type="entry name" value="Ribosomal protein L22/L17"/>
    <property type="match status" value="1"/>
</dbReference>
<dbReference type="HAMAP" id="MF_01331_B">
    <property type="entry name" value="Ribosomal_uL22_B"/>
    <property type="match status" value="1"/>
</dbReference>
<dbReference type="InterPro" id="IPR001063">
    <property type="entry name" value="Ribosomal_uL22"/>
</dbReference>
<dbReference type="InterPro" id="IPR005727">
    <property type="entry name" value="Ribosomal_uL22_bac/chlpt-type"/>
</dbReference>
<dbReference type="InterPro" id="IPR047867">
    <property type="entry name" value="Ribosomal_uL22_bac/org-type"/>
</dbReference>
<dbReference type="InterPro" id="IPR018260">
    <property type="entry name" value="Ribosomal_uL22_CS"/>
</dbReference>
<dbReference type="InterPro" id="IPR036394">
    <property type="entry name" value="Ribosomal_uL22_sf"/>
</dbReference>
<dbReference type="NCBIfam" id="TIGR01044">
    <property type="entry name" value="rplV_bact"/>
    <property type="match status" value="1"/>
</dbReference>
<dbReference type="PANTHER" id="PTHR13501">
    <property type="entry name" value="CHLOROPLAST 50S RIBOSOMAL PROTEIN L22-RELATED"/>
    <property type="match status" value="1"/>
</dbReference>
<dbReference type="PANTHER" id="PTHR13501:SF8">
    <property type="entry name" value="LARGE RIBOSOMAL SUBUNIT PROTEIN UL22M"/>
    <property type="match status" value="1"/>
</dbReference>
<dbReference type="Pfam" id="PF00237">
    <property type="entry name" value="Ribosomal_L22"/>
    <property type="match status" value="1"/>
</dbReference>
<dbReference type="SUPFAM" id="SSF54843">
    <property type="entry name" value="Ribosomal protein L22"/>
    <property type="match status" value="1"/>
</dbReference>
<dbReference type="PROSITE" id="PS00464">
    <property type="entry name" value="RIBOSOMAL_L22"/>
    <property type="match status" value="1"/>
</dbReference>
<reference key="1">
    <citation type="journal article" date="2008" name="Proc. Natl. Acad. Sci. U.S.A.">
        <title>The genome of Cyanothece 51142, a unicellular diazotrophic cyanobacterium important in the marine nitrogen cycle.</title>
        <authorList>
            <person name="Welsh E.A."/>
            <person name="Liberton M."/>
            <person name="Stoeckel J."/>
            <person name="Loh T."/>
            <person name="Elvitigala T."/>
            <person name="Wang C."/>
            <person name="Wollam A."/>
            <person name="Fulton R.S."/>
            <person name="Clifton S.W."/>
            <person name="Jacobs J.M."/>
            <person name="Aurora R."/>
            <person name="Ghosh B.K."/>
            <person name="Sherman L.A."/>
            <person name="Smith R.D."/>
            <person name="Wilson R.K."/>
            <person name="Pakrasi H.B."/>
        </authorList>
    </citation>
    <scope>NUCLEOTIDE SEQUENCE [LARGE SCALE GENOMIC DNA]</scope>
    <source>
        <strain>ATCC 51142 / BH68</strain>
    </source>
</reference>
<sequence>MAVDTTTEAKAIARYIRMSPFKVRRVLDQIRGRSYREALIILEFMPYRACEPILKLLRSAVANAEHNQGLDPTTLVVSQAYADGGPSLRRYRPRAQGRAYQIRKPTCHITIAVAPQVEDN</sequence>
<gene>
    <name evidence="1" type="primary">rplV</name>
    <name evidence="1" type="synonym">rpl22</name>
    <name type="ordered locus">cce_4019</name>
</gene>
<evidence type="ECO:0000255" key="1">
    <source>
        <dbReference type="HAMAP-Rule" id="MF_01331"/>
    </source>
</evidence>
<evidence type="ECO:0000305" key="2"/>
<name>RL22_CROS5</name>
<accession>B1WQR5</accession>
<feature type="chain" id="PRO_1000166056" description="Large ribosomal subunit protein uL22">
    <location>
        <begin position="1"/>
        <end position="120"/>
    </location>
</feature>